<gene>
    <name evidence="1" type="primary">murD</name>
    <name type="ordered locus">BAV2881</name>
</gene>
<organism>
    <name type="scientific">Bordetella avium (strain 197N)</name>
    <dbReference type="NCBI Taxonomy" id="360910"/>
    <lineage>
        <taxon>Bacteria</taxon>
        <taxon>Pseudomonadati</taxon>
        <taxon>Pseudomonadota</taxon>
        <taxon>Betaproteobacteria</taxon>
        <taxon>Burkholderiales</taxon>
        <taxon>Alcaligenaceae</taxon>
        <taxon>Bordetella</taxon>
    </lineage>
</organism>
<keyword id="KW-0067">ATP-binding</keyword>
<keyword id="KW-0131">Cell cycle</keyword>
<keyword id="KW-0132">Cell division</keyword>
<keyword id="KW-0133">Cell shape</keyword>
<keyword id="KW-0961">Cell wall biogenesis/degradation</keyword>
<keyword id="KW-0963">Cytoplasm</keyword>
<keyword id="KW-0436">Ligase</keyword>
<keyword id="KW-0547">Nucleotide-binding</keyword>
<keyword id="KW-0573">Peptidoglycan synthesis</keyword>
<keyword id="KW-1185">Reference proteome</keyword>
<proteinExistence type="inferred from homology"/>
<dbReference type="EC" id="6.3.2.9" evidence="1"/>
<dbReference type="EMBL" id="AM167904">
    <property type="protein sequence ID" value="CAJ50491.1"/>
    <property type="molecule type" value="Genomic_DNA"/>
</dbReference>
<dbReference type="RefSeq" id="WP_012418521.1">
    <property type="nucleotide sequence ID" value="NC_010645.1"/>
</dbReference>
<dbReference type="SMR" id="Q2KVF5"/>
<dbReference type="STRING" id="360910.BAV2881"/>
<dbReference type="KEGG" id="bav:BAV2881"/>
<dbReference type="eggNOG" id="COG0771">
    <property type="taxonomic scope" value="Bacteria"/>
</dbReference>
<dbReference type="HOGENOM" id="CLU_032540_1_1_4"/>
<dbReference type="OrthoDB" id="9809796at2"/>
<dbReference type="UniPathway" id="UPA00219"/>
<dbReference type="Proteomes" id="UP000001977">
    <property type="component" value="Chromosome"/>
</dbReference>
<dbReference type="GO" id="GO:0005737">
    <property type="term" value="C:cytoplasm"/>
    <property type="evidence" value="ECO:0007669"/>
    <property type="project" value="UniProtKB-SubCell"/>
</dbReference>
<dbReference type="GO" id="GO:0005524">
    <property type="term" value="F:ATP binding"/>
    <property type="evidence" value="ECO:0007669"/>
    <property type="project" value="UniProtKB-UniRule"/>
</dbReference>
<dbReference type="GO" id="GO:0004326">
    <property type="term" value="F:tetrahydrofolylpolyglutamate synthase activity"/>
    <property type="evidence" value="ECO:0007669"/>
    <property type="project" value="InterPro"/>
</dbReference>
<dbReference type="GO" id="GO:0008764">
    <property type="term" value="F:UDP-N-acetylmuramoylalanine-D-glutamate ligase activity"/>
    <property type="evidence" value="ECO:0007669"/>
    <property type="project" value="UniProtKB-UniRule"/>
</dbReference>
<dbReference type="GO" id="GO:0051301">
    <property type="term" value="P:cell division"/>
    <property type="evidence" value="ECO:0007669"/>
    <property type="project" value="UniProtKB-KW"/>
</dbReference>
<dbReference type="GO" id="GO:0071555">
    <property type="term" value="P:cell wall organization"/>
    <property type="evidence" value="ECO:0007669"/>
    <property type="project" value="UniProtKB-KW"/>
</dbReference>
<dbReference type="GO" id="GO:0009252">
    <property type="term" value="P:peptidoglycan biosynthetic process"/>
    <property type="evidence" value="ECO:0007669"/>
    <property type="project" value="UniProtKB-UniRule"/>
</dbReference>
<dbReference type="GO" id="GO:0008360">
    <property type="term" value="P:regulation of cell shape"/>
    <property type="evidence" value="ECO:0007669"/>
    <property type="project" value="UniProtKB-KW"/>
</dbReference>
<dbReference type="Gene3D" id="3.90.190.20">
    <property type="entry name" value="Mur ligase, C-terminal domain"/>
    <property type="match status" value="1"/>
</dbReference>
<dbReference type="Gene3D" id="3.40.1190.10">
    <property type="entry name" value="Mur-like, catalytic domain"/>
    <property type="match status" value="1"/>
</dbReference>
<dbReference type="Gene3D" id="3.40.50.720">
    <property type="entry name" value="NAD(P)-binding Rossmann-like Domain"/>
    <property type="match status" value="1"/>
</dbReference>
<dbReference type="HAMAP" id="MF_00639">
    <property type="entry name" value="MurD"/>
    <property type="match status" value="1"/>
</dbReference>
<dbReference type="InterPro" id="IPR018109">
    <property type="entry name" value="Folylpolyglutamate_synth_CS"/>
</dbReference>
<dbReference type="InterPro" id="IPR036565">
    <property type="entry name" value="Mur-like_cat_sf"/>
</dbReference>
<dbReference type="InterPro" id="IPR004101">
    <property type="entry name" value="Mur_ligase_C"/>
</dbReference>
<dbReference type="InterPro" id="IPR036615">
    <property type="entry name" value="Mur_ligase_C_dom_sf"/>
</dbReference>
<dbReference type="InterPro" id="IPR013221">
    <property type="entry name" value="Mur_ligase_cen"/>
</dbReference>
<dbReference type="InterPro" id="IPR005762">
    <property type="entry name" value="MurD"/>
</dbReference>
<dbReference type="NCBIfam" id="TIGR01087">
    <property type="entry name" value="murD"/>
    <property type="match status" value="1"/>
</dbReference>
<dbReference type="PANTHER" id="PTHR43692">
    <property type="entry name" value="UDP-N-ACETYLMURAMOYLALANINE--D-GLUTAMATE LIGASE"/>
    <property type="match status" value="1"/>
</dbReference>
<dbReference type="PANTHER" id="PTHR43692:SF1">
    <property type="entry name" value="UDP-N-ACETYLMURAMOYLALANINE--D-GLUTAMATE LIGASE"/>
    <property type="match status" value="1"/>
</dbReference>
<dbReference type="Pfam" id="PF02875">
    <property type="entry name" value="Mur_ligase_C"/>
    <property type="match status" value="1"/>
</dbReference>
<dbReference type="Pfam" id="PF08245">
    <property type="entry name" value="Mur_ligase_M"/>
    <property type="match status" value="1"/>
</dbReference>
<dbReference type="Pfam" id="PF21799">
    <property type="entry name" value="MurD-like_N"/>
    <property type="match status" value="1"/>
</dbReference>
<dbReference type="SUPFAM" id="SSF51984">
    <property type="entry name" value="MurCD N-terminal domain"/>
    <property type="match status" value="1"/>
</dbReference>
<dbReference type="SUPFAM" id="SSF53623">
    <property type="entry name" value="MurD-like peptide ligases, catalytic domain"/>
    <property type="match status" value="1"/>
</dbReference>
<dbReference type="SUPFAM" id="SSF53244">
    <property type="entry name" value="MurD-like peptide ligases, peptide-binding domain"/>
    <property type="match status" value="1"/>
</dbReference>
<reference key="1">
    <citation type="journal article" date="2006" name="J. Bacteriol.">
        <title>Comparison of the genome sequence of the poultry pathogen Bordetella avium with those of B. bronchiseptica, B. pertussis, and B. parapertussis reveals extensive diversity in surface structures associated with host interaction.</title>
        <authorList>
            <person name="Sebaihia M."/>
            <person name="Preston A."/>
            <person name="Maskell D.J."/>
            <person name="Kuzmiak H."/>
            <person name="Connell T.D."/>
            <person name="King N.D."/>
            <person name="Orndorff P.E."/>
            <person name="Miyamoto D.M."/>
            <person name="Thomson N.R."/>
            <person name="Harris D."/>
            <person name="Goble A."/>
            <person name="Lord A."/>
            <person name="Murphy L."/>
            <person name="Quail M.A."/>
            <person name="Rutter S."/>
            <person name="Squares R."/>
            <person name="Squares S."/>
            <person name="Woodward J."/>
            <person name="Parkhill J."/>
            <person name="Temple L.M."/>
        </authorList>
    </citation>
    <scope>NUCLEOTIDE SEQUENCE [LARGE SCALE GENOMIC DNA]</scope>
    <source>
        <strain>197N</strain>
    </source>
</reference>
<name>MURD_BORA1</name>
<feature type="chain" id="PRO_0000257168" description="UDP-N-acetylmuramoylalanine--D-glutamate ligase">
    <location>
        <begin position="1"/>
        <end position="508"/>
    </location>
</feature>
<feature type="binding site" evidence="1">
    <location>
        <begin position="138"/>
        <end position="144"/>
    </location>
    <ligand>
        <name>ATP</name>
        <dbReference type="ChEBI" id="CHEBI:30616"/>
    </ligand>
</feature>
<comment type="function">
    <text evidence="1">Cell wall formation. Catalyzes the addition of glutamate to the nucleotide precursor UDP-N-acetylmuramoyl-L-alanine (UMA).</text>
</comment>
<comment type="catalytic activity">
    <reaction evidence="1">
        <text>UDP-N-acetyl-alpha-D-muramoyl-L-alanine + D-glutamate + ATP = UDP-N-acetyl-alpha-D-muramoyl-L-alanyl-D-glutamate + ADP + phosphate + H(+)</text>
        <dbReference type="Rhea" id="RHEA:16429"/>
        <dbReference type="ChEBI" id="CHEBI:15378"/>
        <dbReference type="ChEBI" id="CHEBI:29986"/>
        <dbReference type="ChEBI" id="CHEBI:30616"/>
        <dbReference type="ChEBI" id="CHEBI:43474"/>
        <dbReference type="ChEBI" id="CHEBI:83898"/>
        <dbReference type="ChEBI" id="CHEBI:83900"/>
        <dbReference type="ChEBI" id="CHEBI:456216"/>
        <dbReference type="EC" id="6.3.2.9"/>
    </reaction>
</comment>
<comment type="pathway">
    <text evidence="1">Cell wall biogenesis; peptidoglycan biosynthesis.</text>
</comment>
<comment type="subcellular location">
    <subcellularLocation>
        <location evidence="1">Cytoplasm</location>
    </subcellularLocation>
</comment>
<comment type="similarity">
    <text evidence="1">Belongs to the MurCDEF family.</text>
</comment>
<protein>
    <recommendedName>
        <fullName evidence="1">UDP-N-acetylmuramoylalanine--D-glutamate ligase</fullName>
        <ecNumber evidence="1">6.3.2.9</ecNumber>
    </recommendedName>
    <alternativeName>
        <fullName evidence="1">D-glutamic acid-adding enzyme</fullName>
    </alternativeName>
    <alternativeName>
        <fullName evidence="1">UDP-N-acetylmuramoyl-L-alanyl-D-glutamate synthetase</fullName>
    </alternativeName>
</protein>
<accession>Q2KVF5</accession>
<evidence type="ECO:0000255" key="1">
    <source>
        <dbReference type="HAMAP-Rule" id="MF_00639"/>
    </source>
</evidence>
<sequence>MNTELTSRADAPLVLILGLGETGVAAARWCAREGARLRVADTRMQPGGLEGLRAVLQEAQVEYHLGCGSHFDPALLDGVTQLVLSPGLAPGQEPAASLLAAAVSRGIEVLGEVELFARALASLAEARAYHPRLLAVTGTNGKTTVTALTRQLIEACGLSARAAGNISPAALASLMEALDQDALPDVWVLELSSFQLETTHSLQADAAVVLNVTQDHLDWHGDMQAYAQAKARLLKMARVAIVNRDDPLTLAMVADVNGLNVRSFGRDLPQRVGDMGLELGQGVAWLVACEPSDFDEPVVRRKKDAPPPQRGEGRMSRLMPVDALRIRGVHNALNALAALQLARVLELGWGPMLRALRDYAGEPHRAAFVRSIGGVDYINDSKGTNVGATVAALEGLGQTVVLIAGGQGKGQDFSPLRSAVSRHARAVVLIGADGPAIGQVLESTGVALVVAADMREAVRRAAEIAQAGEAVLLSPACASLDMYRNYPHRGQVFVEEVEELALDRGEVL</sequence>